<gene>
    <name evidence="1" type="primary">ureA</name>
    <name type="ordered locus">Cphy_0689</name>
</gene>
<dbReference type="EC" id="3.5.1.5" evidence="1"/>
<dbReference type="EMBL" id="CP000885">
    <property type="protein sequence ID" value="ABX41076.1"/>
    <property type="molecule type" value="Genomic_DNA"/>
</dbReference>
<dbReference type="RefSeq" id="WP_012198719.1">
    <property type="nucleotide sequence ID" value="NC_010001.1"/>
</dbReference>
<dbReference type="SMR" id="A9KJS1"/>
<dbReference type="STRING" id="357809.Cphy_0689"/>
<dbReference type="KEGG" id="cpy:Cphy_0689"/>
<dbReference type="eggNOG" id="COG0831">
    <property type="taxonomic scope" value="Bacteria"/>
</dbReference>
<dbReference type="HOGENOM" id="CLU_145825_1_0_9"/>
<dbReference type="OrthoDB" id="9793527at2"/>
<dbReference type="UniPathway" id="UPA00258">
    <property type="reaction ID" value="UER00370"/>
</dbReference>
<dbReference type="Proteomes" id="UP000000370">
    <property type="component" value="Chromosome"/>
</dbReference>
<dbReference type="GO" id="GO:0005737">
    <property type="term" value="C:cytoplasm"/>
    <property type="evidence" value="ECO:0007669"/>
    <property type="project" value="UniProtKB-SubCell"/>
</dbReference>
<dbReference type="GO" id="GO:0016151">
    <property type="term" value="F:nickel cation binding"/>
    <property type="evidence" value="ECO:0007669"/>
    <property type="project" value="InterPro"/>
</dbReference>
<dbReference type="GO" id="GO:0009039">
    <property type="term" value="F:urease activity"/>
    <property type="evidence" value="ECO:0007669"/>
    <property type="project" value="UniProtKB-UniRule"/>
</dbReference>
<dbReference type="GO" id="GO:0043419">
    <property type="term" value="P:urea catabolic process"/>
    <property type="evidence" value="ECO:0007669"/>
    <property type="project" value="UniProtKB-UniRule"/>
</dbReference>
<dbReference type="CDD" id="cd00390">
    <property type="entry name" value="Urease_gamma"/>
    <property type="match status" value="1"/>
</dbReference>
<dbReference type="Gene3D" id="3.30.280.10">
    <property type="entry name" value="Urease, gamma-like subunit"/>
    <property type="match status" value="1"/>
</dbReference>
<dbReference type="HAMAP" id="MF_00739">
    <property type="entry name" value="Urease_gamma"/>
    <property type="match status" value="1"/>
</dbReference>
<dbReference type="InterPro" id="IPR012010">
    <property type="entry name" value="Urease_gamma"/>
</dbReference>
<dbReference type="InterPro" id="IPR002026">
    <property type="entry name" value="Urease_gamma/gamma-beta_su"/>
</dbReference>
<dbReference type="InterPro" id="IPR036463">
    <property type="entry name" value="Urease_gamma_sf"/>
</dbReference>
<dbReference type="InterPro" id="IPR050069">
    <property type="entry name" value="Urease_subunit"/>
</dbReference>
<dbReference type="NCBIfam" id="NF009712">
    <property type="entry name" value="PRK13241.1"/>
    <property type="match status" value="1"/>
</dbReference>
<dbReference type="NCBIfam" id="TIGR00193">
    <property type="entry name" value="urease_gam"/>
    <property type="match status" value="1"/>
</dbReference>
<dbReference type="PANTHER" id="PTHR33569">
    <property type="entry name" value="UREASE"/>
    <property type="match status" value="1"/>
</dbReference>
<dbReference type="PANTHER" id="PTHR33569:SF1">
    <property type="entry name" value="UREASE"/>
    <property type="match status" value="1"/>
</dbReference>
<dbReference type="Pfam" id="PF00547">
    <property type="entry name" value="Urease_gamma"/>
    <property type="match status" value="1"/>
</dbReference>
<dbReference type="PIRSF" id="PIRSF001223">
    <property type="entry name" value="Urease_gamma"/>
    <property type="match status" value="1"/>
</dbReference>
<dbReference type="SUPFAM" id="SSF54111">
    <property type="entry name" value="Urease, gamma-subunit"/>
    <property type="match status" value="1"/>
</dbReference>
<keyword id="KW-0963">Cytoplasm</keyword>
<keyword id="KW-0378">Hydrolase</keyword>
<keyword id="KW-1185">Reference proteome</keyword>
<proteinExistence type="inferred from homology"/>
<feature type="chain" id="PRO_1000083420" description="Urease subunit gamma">
    <location>
        <begin position="1"/>
        <end position="100"/>
    </location>
</feature>
<accession>A9KJS1</accession>
<evidence type="ECO:0000255" key="1">
    <source>
        <dbReference type="HAMAP-Rule" id="MF_00739"/>
    </source>
</evidence>
<sequence length="100" mass="11077">MMLSPREQEKLLIVVAANLARSRKERGLKLNYPEAISMIAFEILEGARDGKSVSELMQAGREVLTVDDVMDGIADMIHDVQVEATFPDGTKLVTVHQPIK</sequence>
<organism>
    <name type="scientific">Lachnoclostridium phytofermentans (strain ATCC 700394 / DSM 18823 / ISDg)</name>
    <name type="common">Clostridium phytofermentans</name>
    <dbReference type="NCBI Taxonomy" id="357809"/>
    <lineage>
        <taxon>Bacteria</taxon>
        <taxon>Bacillati</taxon>
        <taxon>Bacillota</taxon>
        <taxon>Clostridia</taxon>
        <taxon>Lachnospirales</taxon>
        <taxon>Lachnospiraceae</taxon>
    </lineage>
</organism>
<reference key="1">
    <citation type="submission" date="2007-11" db="EMBL/GenBank/DDBJ databases">
        <title>Complete genome sequence of Clostridium phytofermentans ISDg.</title>
        <authorList>
            <person name="Leschine S.B."/>
            <person name="Warnick T.A."/>
            <person name="Blanchard J.L."/>
            <person name="Schnell D.J."/>
            <person name="Petit E.L."/>
            <person name="LaTouf W.G."/>
            <person name="Copeland A."/>
            <person name="Lucas S."/>
            <person name="Lapidus A."/>
            <person name="Barry K."/>
            <person name="Glavina del Rio T."/>
            <person name="Dalin E."/>
            <person name="Tice H."/>
            <person name="Pitluck S."/>
            <person name="Kiss H."/>
            <person name="Brettin T."/>
            <person name="Bruce D."/>
            <person name="Detter J.C."/>
            <person name="Han C."/>
            <person name="Kuske C."/>
            <person name="Schmutz J."/>
            <person name="Larimer F."/>
            <person name="Land M."/>
            <person name="Hauser L."/>
            <person name="Kyrpides N."/>
            <person name="Kim E.A."/>
            <person name="Richardson P."/>
        </authorList>
    </citation>
    <scope>NUCLEOTIDE SEQUENCE [LARGE SCALE GENOMIC DNA]</scope>
    <source>
        <strain>ATCC 700394 / DSM 18823 / ISDg</strain>
    </source>
</reference>
<name>URE3_LACP7</name>
<protein>
    <recommendedName>
        <fullName evidence="1">Urease subunit gamma</fullName>
        <ecNumber evidence="1">3.5.1.5</ecNumber>
    </recommendedName>
    <alternativeName>
        <fullName evidence="1">Urea amidohydrolase subunit gamma</fullName>
    </alternativeName>
</protein>
<comment type="catalytic activity">
    <reaction evidence="1">
        <text>urea + 2 H2O + H(+) = hydrogencarbonate + 2 NH4(+)</text>
        <dbReference type="Rhea" id="RHEA:20557"/>
        <dbReference type="ChEBI" id="CHEBI:15377"/>
        <dbReference type="ChEBI" id="CHEBI:15378"/>
        <dbReference type="ChEBI" id="CHEBI:16199"/>
        <dbReference type="ChEBI" id="CHEBI:17544"/>
        <dbReference type="ChEBI" id="CHEBI:28938"/>
        <dbReference type="EC" id="3.5.1.5"/>
    </reaction>
</comment>
<comment type="pathway">
    <text evidence="1">Nitrogen metabolism; urea degradation; CO(2) and NH(3) from urea (urease route): step 1/1.</text>
</comment>
<comment type="subunit">
    <text evidence="1">Heterotrimer of UreA (gamma), UreB (beta) and UreC (alpha) subunits. Three heterotrimers associate to form the active enzyme.</text>
</comment>
<comment type="subcellular location">
    <subcellularLocation>
        <location evidence="1">Cytoplasm</location>
    </subcellularLocation>
</comment>
<comment type="similarity">
    <text evidence="1">Belongs to the urease gamma subunit family.</text>
</comment>